<dbReference type="EMBL" id="AJ719940">
    <property type="protein sequence ID" value="CAG31599.1"/>
    <property type="molecule type" value="mRNA"/>
</dbReference>
<dbReference type="RefSeq" id="NP_001034419.1">
    <property type="nucleotide sequence ID" value="NM_001039330.1"/>
</dbReference>
<dbReference type="SMR" id="Q5ZKZ4"/>
<dbReference type="FunCoup" id="Q5ZKZ4">
    <property type="interactions" value="1517"/>
</dbReference>
<dbReference type="STRING" id="9031.ENSGALP00000049366"/>
<dbReference type="GlyCosmos" id="Q5ZKZ4">
    <property type="glycosylation" value="1 site, No reported glycans"/>
</dbReference>
<dbReference type="GlyGen" id="Q5ZKZ4">
    <property type="glycosylation" value="1 site"/>
</dbReference>
<dbReference type="PaxDb" id="9031-ENSGALP00000022198"/>
<dbReference type="GeneID" id="429208"/>
<dbReference type="KEGG" id="gga:429208"/>
<dbReference type="CTD" id="23341"/>
<dbReference type="VEuPathDB" id="HostDB:geneid_429208"/>
<dbReference type="eggNOG" id="KOG0715">
    <property type="taxonomic scope" value="Eukaryota"/>
</dbReference>
<dbReference type="InParanoid" id="Q5ZKZ4"/>
<dbReference type="OrthoDB" id="10065037at2759"/>
<dbReference type="PhylomeDB" id="Q5ZKZ4"/>
<dbReference type="PRO" id="PR:Q5ZKZ4"/>
<dbReference type="Proteomes" id="UP000000539">
    <property type="component" value="Unassembled WGS sequence"/>
</dbReference>
<dbReference type="GO" id="GO:0005789">
    <property type="term" value="C:endoplasmic reticulum membrane"/>
    <property type="evidence" value="ECO:0000250"/>
    <property type="project" value="UniProtKB"/>
</dbReference>
<dbReference type="GO" id="GO:0016243">
    <property type="term" value="P:regulation of autophagosome size"/>
    <property type="evidence" value="ECO:0000250"/>
    <property type="project" value="UniProtKB"/>
</dbReference>
<dbReference type="CDD" id="cd06257">
    <property type="entry name" value="DnaJ"/>
    <property type="match status" value="1"/>
</dbReference>
<dbReference type="CDD" id="cd02963">
    <property type="entry name" value="TRX_DnaJ"/>
    <property type="match status" value="1"/>
</dbReference>
<dbReference type="Gene3D" id="1.10.287.110">
    <property type="entry name" value="DnaJ domain"/>
    <property type="match status" value="1"/>
</dbReference>
<dbReference type="Gene3D" id="3.40.30.10">
    <property type="entry name" value="Glutaredoxin"/>
    <property type="match status" value="1"/>
</dbReference>
<dbReference type="InterPro" id="IPR052448">
    <property type="entry name" value="DnaJ_C16_autophagy_reg"/>
</dbReference>
<dbReference type="InterPro" id="IPR001623">
    <property type="entry name" value="DnaJ_domain"/>
</dbReference>
<dbReference type="InterPro" id="IPR018253">
    <property type="entry name" value="DnaJ_domain_CS"/>
</dbReference>
<dbReference type="InterPro" id="IPR043361">
    <property type="entry name" value="DNAJC16_TRX"/>
</dbReference>
<dbReference type="InterPro" id="IPR036869">
    <property type="entry name" value="J_dom_sf"/>
</dbReference>
<dbReference type="InterPro" id="IPR036249">
    <property type="entry name" value="Thioredoxin-like_sf"/>
</dbReference>
<dbReference type="InterPro" id="IPR013766">
    <property type="entry name" value="Thioredoxin_domain"/>
</dbReference>
<dbReference type="PANTHER" id="PTHR44303">
    <property type="entry name" value="DNAJ HOMOLOG SUBFAMILY C MEMBER 16"/>
    <property type="match status" value="1"/>
</dbReference>
<dbReference type="PANTHER" id="PTHR44303:SF2">
    <property type="entry name" value="DNAJ HOMOLOG SUBFAMILY C MEMBER 16"/>
    <property type="match status" value="1"/>
</dbReference>
<dbReference type="Pfam" id="PF00226">
    <property type="entry name" value="DnaJ"/>
    <property type="match status" value="1"/>
</dbReference>
<dbReference type="Pfam" id="PF00085">
    <property type="entry name" value="Thioredoxin"/>
    <property type="match status" value="1"/>
</dbReference>
<dbReference type="PRINTS" id="PR00625">
    <property type="entry name" value="JDOMAIN"/>
</dbReference>
<dbReference type="SMART" id="SM00271">
    <property type="entry name" value="DnaJ"/>
    <property type="match status" value="1"/>
</dbReference>
<dbReference type="SUPFAM" id="SSF46565">
    <property type="entry name" value="Chaperone J-domain"/>
    <property type="match status" value="1"/>
</dbReference>
<dbReference type="SUPFAM" id="SSF52833">
    <property type="entry name" value="Thioredoxin-like"/>
    <property type="match status" value="1"/>
</dbReference>
<dbReference type="PROSITE" id="PS00636">
    <property type="entry name" value="DNAJ_1"/>
    <property type="match status" value="1"/>
</dbReference>
<dbReference type="PROSITE" id="PS50076">
    <property type="entry name" value="DNAJ_2"/>
    <property type="match status" value="1"/>
</dbReference>
<dbReference type="PROSITE" id="PS51352">
    <property type="entry name" value="THIOREDOXIN_2"/>
    <property type="match status" value="1"/>
</dbReference>
<feature type="signal peptide" evidence="2">
    <location>
        <begin position="1"/>
        <end position="23"/>
    </location>
</feature>
<feature type="chain" id="PRO_0000236687" description="DnaJ homolog subfamily C member 16">
    <location>
        <begin position="24"/>
        <end position="777"/>
    </location>
</feature>
<feature type="topological domain" description="Cytoplasmic" evidence="2">
    <location>
        <begin position="24"/>
        <end position="531"/>
    </location>
</feature>
<feature type="transmembrane region" description="Helical; Anchor for type IV membrane protein" evidence="2">
    <location>
        <begin position="532"/>
        <end position="552"/>
    </location>
</feature>
<feature type="topological domain" description="Extracellular" evidence="2">
    <location>
        <begin position="553"/>
        <end position="777"/>
    </location>
</feature>
<feature type="domain" description="J" evidence="3">
    <location>
        <begin position="28"/>
        <end position="92"/>
    </location>
</feature>
<feature type="domain" description="Thioredoxin" evidence="4">
    <location>
        <begin position="117"/>
        <end position="243"/>
    </location>
</feature>
<feature type="region of interest" description="Disordered" evidence="5">
    <location>
        <begin position="558"/>
        <end position="589"/>
    </location>
</feature>
<feature type="compositionally biased region" description="Basic and acidic residues" evidence="5">
    <location>
        <begin position="559"/>
        <end position="580"/>
    </location>
</feature>
<feature type="glycosylation site" description="N-linked (GlcNAc...) asparagine" evidence="2">
    <location>
        <position position="627"/>
    </location>
</feature>
<proteinExistence type="evidence at transcript level"/>
<reference key="1">
    <citation type="journal article" date="2005" name="Genome Biol.">
        <title>Full-length cDNAs from chicken bursal lymphocytes to facilitate gene function analysis.</title>
        <authorList>
            <person name="Caldwell R.B."/>
            <person name="Kierzek A.M."/>
            <person name="Arakawa H."/>
            <person name="Bezzubov Y."/>
            <person name="Zaim J."/>
            <person name="Fiedler P."/>
            <person name="Kutter S."/>
            <person name="Blagodatski A."/>
            <person name="Kostovska D."/>
            <person name="Koter M."/>
            <person name="Plachy J."/>
            <person name="Carninci P."/>
            <person name="Hayashizaki Y."/>
            <person name="Buerstedde J.-M."/>
        </authorList>
    </citation>
    <scope>NUCLEOTIDE SEQUENCE [LARGE SCALE MRNA]</scope>
    <source>
        <strain>CB</strain>
        <tissue>Bursa of Fabricius</tissue>
    </source>
</reference>
<accession>Q5ZKZ4</accession>
<name>DJC16_CHICK</name>
<sequence length="777" mass="89415">MELGRAGPAGLLLLLLLLLAAQAAPERDPYRVLGVGRSSSQADIKKAYKRLARQWHPDKNKDPGAEDKFIQISKAYEILSNEEKRANFDRYGDAGESQGYSQHQQRQFHHFHEGFYFDESFFHFPFNSERRDTSDEKYLLHFSHYINEIVPDSFKKPYLIKITSDWCFSCIHIEPVWKEVAQELEALGVGIGVVHAGYERRLAHHLGAHSTPSILGLINGKITFFHSAVVRENLRQFVENLLPGNLVEKITDKNYIRFLSNWKKENKPHVLLFDHMPVVPLLYKLTAFAYRDYLSFGYVYVGLRGTEELSSQYNINVYTPTLMIFKEHIDKPADVAQARDMKKQLIDDFLSQNKFLMAARLTNQRLFQELCPVKKSHRQRKHCVVLLTGEGDKFADAYEAFLTFAVANTKDTLRFAHIYNDRQPEFADALLMDEEKYRGKSAVVILERRNNAGKIAYKTLEEAWQGSNEDNFILLDLLDQLRTDPGLLSSETVLADLNDELAPMFLIRWFYSTLDYILDCWDSLFHSNWREMMPLLSLLFSALFILFGTVIVQAFSDSSDTRDSPASEKKDTTAKTEKNDTSFNKESNSRVPKKGFVEVTELTDINYNSNLVRLRPGHMNVVLILSNSTKTALLQKFALEVYTFTGSSSLHFSFLSLDKHREWLEYLLEFAQDAAPIPNQYDKHFLERDYTGYVLALNGHKKYFCLFKPHRSGDEGGTLGACEDYDSSLHTEARGKSSCSPGSRSLKNKLHKLSFWMERLLEGSLQRFYIPSWPALD</sequence>
<keyword id="KW-0072">Autophagy</keyword>
<keyword id="KW-0256">Endoplasmic reticulum</keyword>
<keyword id="KW-0325">Glycoprotein</keyword>
<keyword id="KW-0472">Membrane</keyword>
<keyword id="KW-1185">Reference proteome</keyword>
<keyword id="KW-0732">Signal</keyword>
<keyword id="KW-0812">Transmembrane</keyword>
<keyword id="KW-1133">Transmembrane helix</keyword>
<evidence type="ECO:0000250" key="1">
    <source>
        <dbReference type="UniProtKB" id="Q9Y2G8"/>
    </source>
</evidence>
<evidence type="ECO:0000255" key="2"/>
<evidence type="ECO:0000255" key="3">
    <source>
        <dbReference type="PROSITE-ProRule" id="PRU00286"/>
    </source>
</evidence>
<evidence type="ECO:0000255" key="4">
    <source>
        <dbReference type="PROSITE-ProRule" id="PRU00691"/>
    </source>
</evidence>
<evidence type="ECO:0000256" key="5">
    <source>
        <dbReference type="SAM" id="MobiDB-lite"/>
    </source>
</evidence>
<evidence type="ECO:0000305" key="6"/>
<protein>
    <recommendedName>
        <fullName>DnaJ homolog subfamily C member 16</fullName>
    </recommendedName>
    <alternativeName>
        <fullName evidence="1">Endoplasmic reticulum DNA J domain-containing protein 8</fullName>
        <shortName>ER-resident protein ERdj8</shortName>
        <shortName>ERdj8</shortName>
    </alternativeName>
</protein>
<comment type="function">
    <text evidence="1">Plays an important role in regulating the size of autophagosomes during the formation process.</text>
</comment>
<comment type="subcellular location">
    <subcellularLocation>
        <location evidence="1">Endoplasmic reticulum membrane</location>
        <topology evidence="6">Single-pass type IV membrane protein</topology>
    </subcellularLocation>
</comment>
<gene>
    <name type="primary">DNAJC16</name>
    <name type="synonym">ERDJ8</name>
    <name type="ORF">RCJMB04_8j20</name>
</gene>
<organism>
    <name type="scientific">Gallus gallus</name>
    <name type="common">Chicken</name>
    <dbReference type="NCBI Taxonomy" id="9031"/>
    <lineage>
        <taxon>Eukaryota</taxon>
        <taxon>Metazoa</taxon>
        <taxon>Chordata</taxon>
        <taxon>Craniata</taxon>
        <taxon>Vertebrata</taxon>
        <taxon>Euteleostomi</taxon>
        <taxon>Archelosauria</taxon>
        <taxon>Archosauria</taxon>
        <taxon>Dinosauria</taxon>
        <taxon>Saurischia</taxon>
        <taxon>Theropoda</taxon>
        <taxon>Coelurosauria</taxon>
        <taxon>Aves</taxon>
        <taxon>Neognathae</taxon>
        <taxon>Galloanserae</taxon>
        <taxon>Galliformes</taxon>
        <taxon>Phasianidae</taxon>
        <taxon>Phasianinae</taxon>
        <taxon>Gallus</taxon>
    </lineage>
</organism>